<feature type="chain" id="PRO_0000103320" description="DNA polymerase III subunit alpha">
    <location>
        <begin position="1"/>
        <end position="1335"/>
    </location>
</feature>
<feature type="region of interest" description="Disordered" evidence="3">
    <location>
        <begin position="442"/>
        <end position="461"/>
    </location>
</feature>
<feature type="compositionally biased region" description="Acidic residues" evidence="3">
    <location>
        <begin position="446"/>
        <end position="458"/>
    </location>
</feature>
<feature type="mutagenesis site" description="Temperature sensitive, viability decreases 10(5)-fold at 37 degrees Celsius; cells recover at 30 degrees more slowly than wild-type from heat shock; at 37 degrees cells swell and accumulate aberrant nucleoids. DNA synthesis stops immediately on temperature upshift; if combined with a polA deletion viability at 37 degrees decreases further. Greater than wild-type levels of DNA degradation post-IR." evidence="4">
    <original>S</original>
    <variation>P</variation>
    <location>
        <position position="1035"/>
    </location>
</feature>
<accession>Q9RX08</accession>
<gene>
    <name type="primary">dnaE</name>
    <name type="ordered locus">DR_0507</name>
</gene>
<organism>
    <name type="scientific">Deinococcus radiodurans (strain ATCC 13939 / DSM 20539 / JCM 16871 / CCUG 27074 / LMG 4051 / NBRC 15346 / NCIMB 9279 / VKM B-1422 / R1)</name>
    <dbReference type="NCBI Taxonomy" id="243230"/>
    <lineage>
        <taxon>Bacteria</taxon>
        <taxon>Thermotogati</taxon>
        <taxon>Deinococcota</taxon>
        <taxon>Deinococci</taxon>
        <taxon>Deinococcales</taxon>
        <taxon>Deinococcaceae</taxon>
        <taxon>Deinococcus</taxon>
    </lineage>
</organism>
<protein>
    <recommendedName>
        <fullName>DNA polymerase III subunit alpha</fullName>
        <shortName>Pol III catalytic subunit</shortName>
        <ecNumber>2.7.7.7</ecNumber>
    </recommendedName>
</protein>
<sequence>MTVSDAPTPHIHLPDGSCCQPKKFAHLHQHTQYSLLDGAAKLKDLLKWAKEVTPEGQTPALAMTDHGNMHGAVHFYNYAMGMEVKPIIGYEAYVVPGFGTRRDRSRAQDGEKGIFHLTLLARDFEGYQNLCRLSSRGYTEGYYYKPRIDHELLQEHHKGIIAFSGCLGSEVQQLLMQGREDDARARLLWYRELFGDNYFIEIQDHGLPEQKKNNPILKAWAQELGIGMVATNDGHYVKKSDATAHETLLAIQTKATLADENRFKFPCDEFYVKNLEEMQRALPVSEWGEEPFDNTAHIAELCNVELPVGKKRQYQMPQLPIPEGRSMAEELRVQTYAGAVKRYPAHLTEGLLRDYAARSLAELGEADAARVLKRTGGCDSASCDLDTLYTLLAFLGSEWEARGKEAGEKYTPYPALEKMEQDGESGTLPAYAHADCRAARRQDSDTSIELDPDTDDEETTRSHHRYALKLLRRAEYELSVINNMGFPDYFLIVADYINWAKDHDISVGPGRGSGAGSLVAYAIRITNLDPLEFELLFERFLNPDRISMPDFDIDFNDARRTEVIGYVQEKYGTDKVAQIATFGTMASKACLKDVARVMGLEYAKVDKVSKLIPIKFGKSYSLEQAREAVPDIQQMLAEDAQLLEAYEFAQKLEGLTRHASVHAAGVVIGREELTNLVPVMRDTSGEGQVCQYDMKSVEDIGLIKMDFLGLRTLSFLDEAKRILRESGTDFEEKYGDFDHIPFDDEKTYELMSRGDTKGVFQLEGAGIADASRRLKPRRLADIIALSALYRPGPMENIPTYVRRHHGIEEVDYDKDGFPNSKQWLEKILQETYGIPVYQEQIMQIASEVAGYSLGGADLLRRAMGKKDAEEMKRQRQLFVVGAKEKGVPEDEGNKLFDMLDAFANYGFNKSHSAAYGVITYQTAWLKANYPVQFMAALLTVERRDSDKVAEYVSDARKMDLHVLPPDINRSSSDFAVAGEEILFGLYAIKGLGESAVLRILEEREKAGAFKSLADFCSRLGNKVCNRKALESLIKSGAFDAFGERHQLIESLEDALEDAAGTAEINARAQSGMSMMFGMEEVKKERPLRSSIAPYSDLERLAIEKEALGLYISGHPLEQHEGLREAASCRVSDLDAWFALQNVAPGKRQKAVLAGMIEGVVKKPTKSGGMMARFILADESGQMELVAFSRAYDRIEPKLVNDTPALVIVELEAEDGGLRAIAEEIVSIEQLSEVPKVMYVTIDLETASPDALGDFQSVLDEYAGSMPTYLRLETPEQFVVYQLDHGMGSPEAIRALNQTFAWADAHLAYDQQTILGRFAPKPPAWMNRQQGGGMRA</sequence>
<comment type="function">
    <text evidence="2 4">DNA polymerase III is a complex, multichain enzyme responsible for most of the replicative DNA synthesis in bacteria as well as the bulk of DNA synthesis/repair after ionizing radiation (IR) (PubMed:19303848). The alpha chain is the catalytic subunit (PubMed:19303848). Following severe irradiation (7 kGy of gamma irradiation) genomic DNA is fragmented. DNA is progressively degraded for the first 1.5 hours after IR, in a step promoted by RecA and counterbalanced by DNA Pol I and Pol III, followed by massive DNA synthesis and genome reassembly in the next hour. Optimal priming of DNA synthesis requires both RecA and RadA, Pol III initiates DNA synthesis while both Pol I and Pol III are required for its continuation (PubMed:19303848). This DNA polymerase also exhibits 3' to 5' exonuclease activity (By similarity).</text>
</comment>
<comment type="catalytic activity">
    <reaction>
        <text>DNA(n) + a 2'-deoxyribonucleoside 5'-triphosphate = DNA(n+1) + diphosphate</text>
        <dbReference type="Rhea" id="RHEA:22508"/>
        <dbReference type="Rhea" id="RHEA-COMP:17339"/>
        <dbReference type="Rhea" id="RHEA-COMP:17340"/>
        <dbReference type="ChEBI" id="CHEBI:33019"/>
        <dbReference type="ChEBI" id="CHEBI:61560"/>
        <dbReference type="ChEBI" id="CHEBI:173112"/>
        <dbReference type="EC" id="2.7.7.7"/>
    </reaction>
</comment>
<comment type="subunit">
    <text evidence="1">DNA polymerase III contains a core (composed of alpha, epsilon and theta chains) that associates with a tau subunit. This core dimerizes to form the PolIII' complex. PolIII' associates with the gamma complex (composed of gamma, delta, delta', psi and chi chains) and with the beta chain to form the complete DNA polymerase III complex (By similarity).</text>
</comment>
<comment type="subcellular location">
    <subcellularLocation>
        <location evidence="1">Cytoplasm</location>
    </subcellularLocation>
</comment>
<comment type="disruption phenotype">
    <text evidence="6">Essential, it cannot be deleted.</text>
</comment>
<comment type="similarity">
    <text evidence="5">Belongs to the DNA polymerase type-C family. DnaE subfamily.</text>
</comment>
<keyword id="KW-0963">Cytoplasm</keyword>
<keyword id="KW-0227">DNA damage</keyword>
<keyword id="KW-0234">DNA repair</keyword>
<keyword id="KW-0235">DNA replication</keyword>
<keyword id="KW-0239">DNA-directed DNA polymerase</keyword>
<keyword id="KW-0548">Nucleotidyltransferase</keyword>
<keyword id="KW-1185">Reference proteome</keyword>
<keyword id="KW-0808">Transferase</keyword>
<dbReference type="EC" id="2.7.7.7"/>
<dbReference type="EMBL" id="AE000513">
    <property type="protein sequence ID" value="AAF10085.1"/>
    <property type="molecule type" value="Genomic_DNA"/>
</dbReference>
<dbReference type="PIR" id="H75511">
    <property type="entry name" value="H75511"/>
</dbReference>
<dbReference type="RefSeq" id="NP_294230.1">
    <property type="nucleotide sequence ID" value="NC_001263.1"/>
</dbReference>
<dbReference type="RefSeq" id="WP_010887152.1">
    <property type="nucleotide sequence ID" value="NC_001263.1"/>
</dbReference>
<dbReference type="SMR" id="Q9RX08"/>
<dbReference type="FunCoup" id="Q9RX08">
    <property type="interactions" value="326"/>
</dbReference>
<dbReference type="STRING" id="243230.DR_0507"/>
<dbReference type="PaxDb" id="243230-DR_0507"/>
<dbReference type="EnsemblBacteria" id="AAF10085">
    <property type="protein sequence ID" value="AAF10085"/>
    <property type="gene ID" value="DR_0507"/>
</dbReference>
<dbReference type="GeneID" id="69516744"/>
<dbReference type="KEGG" id="dra:DR_0507"/>
<dbReference type="PATRIC" id="fig|243230.17.peg.684"/>
<dbReference type="eggNOG" id="COG0587">
    <property type="taxonomic scope" value="Bacteria"/>
</dbReference>
<dbReference type="HOGENOM" id="CLU_001600_0_0_0"/>
<dbReference type="InParanoid" id="Q9RX08"/>
<dbReference type="OrthoDB" id="9803237at2"/>
<dbReference type="Proteomes" id="UP000002524">
    <property type="component" value="Chromosome 1"/>
</dbReference>
<dbReference type="GO" id="GO:0005737">
    <property type="term" value="C:cytoplasm"/>
    <property type="evidence" value="ECO:0007669"/>
    <property type="project" value="UniProtKB-SubCell"/>
</dbReference>
<dbReference type="GO" id="GO:0008408">
    <property type="term" value="F:3'-5' exonuclease activity"/>
    <property type="evidence" value="ECO:0007669"/>
    <property type="project" value="InterPro"/>
</dbReference>
<dbReference type="GO" id="GO:0003887">
    <property type="term" value="F:DNA-directed DNA polymerase activity"/>
    <property type="evidence" value="ECO:0000318"/>
    <property type="project" value="GO_Central"/>
</dbReference>
<dbReference type="GO" id="GO:0003676">
    <property type="term" value="F:nucleic acid binding"/>
    <property type="evidence" value="ECO:0007669"/>
    <property type="project" value="InterPro"/>
</dbReference>
<dbReference type="GO" id="GO:0006281">
    <property type="term" value="P:DNA repair"/>
    <property type="evidence" value="ECO:0007669"/>
    <property type="project" value="UniProtKB-KW"/>
</dbReference>
<dbReference type="GO" id="GO:0006260">
    <property type="term" value="P:DNA replication"/>
    <property type="evidence" value="ECO:0007669"/>
    <property type="project" value="UniProtKB-KW"/>
</dbReference>
<dbReference type="CDD" id="cd04485">
    <property type="entry name" value="DnaE_OBF"/>
    <property type="match status" value="1"/>
</dbReference>
<dbReference type="CDD" id="cd12113">
    <property type="entry name" value="PHP_PolIIIA_DnaE3"/>
    <property type="match status" value="1"/>
</dbReference>
<dbReference type="Gene3D" id="1.10.150.870">
    <property type="match status" value="1"/>
</dbReference>
<dbReference type="Gene3D" id="1.10.10.1600">
    <property type="entry name" value="Bacterial DNA polymerase III alpha subunit, thumb domain"/>
    <property type="match status" value="1"/>
</dbReference>
<dbReference type="Gene3D" id="3.20.20.140">
    <property type="entry name" value="Metal-dependent hydrolases"/>
    <property type="match status" value="1"/>
</dbReference>
<dbReference type="InterPro" id="IPR011708">
    <property type="entry name" value="DNA_pol3_alpha_NTPase_dom"/>
</dbReference>
<dbReference type="InterPro" id="IPR041931">
    <property type="entry name" value="DNA_pol3_alpha_thumb_dom"/>
</dbReference>
<dbReference type="InterPro" id="IPR040982">
    <property type="entry name" value="DNA_pol3_finger"/>
</dbReference>
<dbReference type="InterPro" id="IPR004805">
    <property type="entry name" value="DnaE2/DnaE/PolC"/>
</dbReference>
<dbReference type="InterPro" id="IPR029460">
    <property type="entry name" value="DNAPol_HHH"/>
</dbReference>
<dbReference type="InterPro" id="IPR004365">
    <property type="entry name" value="NA-bd_OB_tRNA"/>
</dbReference>
<dbReference type="InterPro" id="IPR004013">
    <property type="entry name" value="PHP_dom"/>
</dbReference>
<dbReference type="InterPro" id="IPR003141">
    <property type="entry name" value="Pol/His_phosphatase_N"/>
</dbReference>
<dbReference type="InterPro" id="IPR016195">
    <property type="entry name" value="Pol/histidinol_Pase-like"/>
</dbReference>
<dbReference type="NCBIfam" id="TIGR00594">
    <property type="entry name" value="polc"/>
    <property type="match status" value="1"/>
</dbReference>
<dbReference type="NCBIfam" id="NF004226">
    <property type="entry name" value="PRK05673.1"/>
    <property type="match status" value="1"/>
</dbReference>
<dbReference type="PANTHER" id="PTHR32294">
    <property type="entry name" value="DNA POLYMERASE III SUBUNIT ALPHA"/>
    <property type="match status" value="1"/>
</dbReference>
<dbReference type="PANTHER" id="PTHR32294:SF0">
    <property type="entry name" value="DNA POLYMERASE III SUBUNIT ALPHA"/>
    <property type="match status" value="1"/>
</dbReference>
<dbReference type="Pfam" id="PF07733">
    <property type="entry name" value="DNA_pol3_alpha"/>
    <property type="match status" value="1"/>
</dbReference>
<dbReference type="Pfam" id="PF17657">
    <property type="entry name" value="DNA_pol3_finger"/>
    <property type="match status" value="1"/>
</dbReference>
<dbReference type="Pfam" id="PF14579">
    <property type="entry name" value="HHH_6"/>
    <property type="match status" value="1"/>
</dbReference>
<dbReference type="Pfam" id="PF02811">
    <property type="entry name" value="PHP"/>
    <property type="match status" value="1"/>
</dbReference>
<dbReference type="Pfam" id="PF01336">
    <property type="entry name" value="tRNA_anti-codon"/>
    <property type="match status" value="1"/>
</dbReference>
<dbReference type="SMART" id="SM00481">
    <property type="entry name" value="POLIIIAc"/>
    <property type="match status" value="1"/>
</dbReference>
<dbReference type="SUPFAM" id="SSF89550">
    <property type="entry name" value="PHP domain-like"/>
    <property type="match status" value="1"/>
</dbReference>
<evidence type="ECO:0000250" key="1"/>
<evidence type="ECO:0000250" key="2">
    <source>
        <dbReference type="UniProtKB" id="P10443"/>
    </source>
</evidence>
<evidence type="ECO:0000256" key="3">
    <source>
        <dbReference type="SAM" id="MobiDB-lite"/>
    </source>
</evidence>
<evidence type="ECO:0000269" key="4">
    <source>
    </source>
</evidence>
<evidence type="ECO:0000305" key="5"/>
<evidence type="ECO:0000305" key="6">
    <source>
    </source>
</evidence>
<name>DPO3A_DEIRA</name>
<proteinExistence type="evidence at protein level"/>
<reference key="1">
    <citation type="journal article" date="1999" name="Science">
        <title>Genome sequence of the radioresistant bacterium Deinococcus radiodurans R1.</title>
        <authorList>
            <person name="White O."/>
            <person name="Eisen J.A."/>
            <person name="Heidelberg J.F."/>
            <person name="Hickey E.K."/>
            <person name="Peterson J.D."/>
            <person name="Dodson R.J."/>
            <person name="Haft D.H."/>
            <person name="Gwinn M.L."/>
            <person name="Nelson W.C."/>
            <person name="Richardson D.L."/>
            <person name="Moffat K.S."/>
            <person name="Qin H."/>
            <person name="Jiang L."/>
            <person name="Pamphile W."/>
            <person name="Crosby M."/>
            <person name="Shen M."/>
            <person name="Vamathevan J.J."/>
            <person name="Lam P."/>
            <person name="McDonald L.A."/>
            <person name="Utterback T.R."/>
            <person name="Zalewski C."/>
            <person name="Makarova K.S."/>
            <person name="Aravind L."/>
            <person name="Daly M.J."/>
            <person name="Minton K.W."/>
            <person name="Fleischmann R.D."/>
            <person name="Ketchum K.A."/>
            <person name="Nelson K.E."/>
            <person name="Salzberg S.L."/>
            <person name="Smith H.O."/>
            <person name="Venter J.C."/>
            <person name="Fraser C.M."/>
        </authorList>
    </citation>
    <scope>NUCLEOTIDE SEQUENCE [LARGE SCALE GENOMIC DNA]</scope>
    <source>
        <strain>ATCC 13939 / DSM 20539 / JCM 16871 / CCUG 27074 / LMG 4051 / NBRC 15346 / NCIMB 9279 / VKM B-1422 / R1</strain>
    </source>
</reference>
<reference key="2">
    <citation type="journal article" date="2009" name="Cell">
        <title>Recombination and replication in DNA repair of heavily irradiated Deinococcus radiodurans.</title>
        <authorList>
            <person name="Slade D."/>
            <person name="Lindner A.B."/>
            <person name="Paul G."/>
            <person name="Radman M."/>
        </authorList>
    </citation>
    <scope>FUNCTION</scope>
    <scope>DISRUPTION PHENOTYPE</scope>
    <scope>MUTAGENESIS OF SER-1035</scope>
    <source>
        <strain>ATCC 13939 / DSM 20539 / JCM 16871 / CCUG 27074 / LMG 4051 / NBRC 15346 / NCIMB 9279 / VKM B-1422 / R1</strain>
    </source>
</reference>